<organism>
    <name type="scientific">Pseudomonas phage phiKZ</name>
    <dbReference type="NCBI Taxonomy" id="2905945"/>
    <lineage>
        <taxon>Viruses</taxon>
        <taxon>Duplodnaviria</taxon>
        <taxon>Heunggongvirae</taxon>
        <taxon>Uroviricota</taxon>
        <taxon>Caudoviricetes</taxon>
        <taxon>Phikzvirus</taxon>
        <taxon>Phikzvirus phiKZ</taxon>
    </lineage>
</organism>
<organismHost>
    <name type="scientific">Pseudomonas aeruginosa</name>
    <dbReference type="NCBI Taxonomy" id="287"/>
</organismHost>
<gene>
    <name type="ordered locus">PHIKZ039</name>
</gene>
<proteinExistence type="evidence at protein level"/>
<protein>
    <recommendedName>
        <fullName evidence="1">Phage tubulin-like protein</fullName>
        <shortName evidence="1">PhuZ</shortName>
        <ecNumber evidence="1">3.6.5.-</ecNumber>
    </recommendedName>
    <alternativeName>
        <fullName evidence="1">Phage tubulin/FtsZ</fullName>
    </alternativeName>
    <alternativeName>
        <fullName evidence="1">Tubulin-like protein TubZ</fullName>
    </alternativeName>
</protein>
<dbReference type="EC" id="3.6.5.-" evidence="1"/>
<dbReference type="EMBL" id="AF399011">
    <property type="protein sequence ID" value="AAL82940.1"/>
    <property type="molecule type" value="Genomic_DNA"/>
</dbReference>
<dbReference type="RefSeq" id="NP_803605.1">
    <property type="nucleotide sequence ID" value="NC_004629.1"/>
</dbReference>
<dbReference type="PDB" id="3ZBP">
    <property type="method" value="X-ray"/>
    <property type="resolution" value="2.00 A"/>
    <property type="chains" value="A=1-327"/>
</dbReference>
<dbReference type="PDB" id="3ZBQ">
    <property type="method" value="X-ray"/>
    <property type="resolution" value="1.70 A"/>
    <property type="chains" value="A=1-327"/>
</dbReference>
<dbReference type="PDBsum" id="3ZBP"/>
<dbReference type="PDBsum" id="3ZBQ"/>
<dbReference type="SMR" id="Q8SDC3"/>
<dbReference type="GeneID" id="1258293"/>
<dbReference type="KEGG" id="vg:1258293"/>
<dbReference type="EvolutionaryTrace" id="Q8SDC3"/>
<dbReference type="Proteomes" id="UP000002098">
    <property type="component" value="Genome"/>
</dbReference>
<dbReference type="GO" id="GO:0030430">
    <property type="term" value="C:host cell cytoplasm"/>
    <property type="evidence" value="ECO:0007669"/>
    <property type="project" value="UniProtKB-SubCell"/>
</dbReference>
<dbReference type="GO" id="GO:0005525">
    <property type="term" value="F:GTP binding"/>
    <property type="evidence" value="ECO:0007669"/>
    <property type="project" value="UniProtKB-KW"/>
</dbReference>
<dbReference type="GO" id="GO:0003924">
    <property type="term" value="F:GTPase activity"/>
    <property type="evidence" value="ECO:0007669"/>
    <property type="project" value="RHEA"/>
</dbReference>
<dbReference type="Gene3D" id="3.40.50.1440">
    <property type="entry name" value="Tubulin/FtsZ, GTPase domain"/>
    <property type="match status" value="1"/>
</dbReference>
<dbReference type="InterPro" id="IPR054768">
    <property type="entry name" value="PhuZ_C"/>
</dbReference>
<dbReference type="InterPro" id="IPR036525">
    <property type="entry name" value="Tubulin/FtsZ_GTPase_sf"/>
</dbReference>
<dbReference type="Pfam" id="PF22334">
    <property type="entry name" value="TubZ_C_2"/>
    <property type="match status" value="1"/>
</dbReference>
<dbReference type="SUPFAM" id="SSF52490">
    <property type="entry name" value="Tubulin nucleotide-binding domain-like"/>
    <property type="match status" value="1"/>
</dbReference>
<sequence>MMSKVKTRIYFCGGAGFRIGELFHGYHEDVCYIDTSVQNKHKHNTDDNTIIIEADTKLADQTARKRAIGMGKDRKAAAELISAHIPAIAHHFPAGDTNIVVYSMGGASGSTIGPSLVSHLQQQGEVVVSVVIGSYDSDISLRNSSGSLKTFEGVSSVSKVPMIINYHENVEGIPQSMVNQNILEVLNALVILFNQEHQSLDLMDITNWAHFHKHHDVPVQTVQLHVCFDRQEAQAILDPISIASLYTDPDRDVSISTVLTRTTGYADPEKYDFDQMHFVINGLSIEDIRKRLEERREMMNRAKANMRKRQSTLDVDDQATSSGLVFD</sequence>
<comment type="function">
    <text evidence="1 4 5 7">A tubulin-like GTPase that forms filaments, which are required for positioning viral DNA and capsids in the middle of the host cell for optimal replication. The motor component of a partition system which pushes phage DNA (encased by protein gp105) to the center of the bacterial host cell (PubMed:28813669). Also required for movement of phage capsids to the vicinity of the viral DNA and rotation of the encased viral DNA at midcell (PubMed:28813669). Forms filaments during the lytic phase, which position phage DNA at the center of the bacterial host cell (PubMed:28813669). Filaments have a three-stranded intertwined architecture and form a spindle-like cytoskeleton within the infected cell (PubMed:23528827). Has GTPase activity (Probable). Filaments grow at the plus end and depolymerize at the minus end, a process called treadmilling, and switch from growing in a polar manner to catastrophic depolymerization, i.e. they display dynamic instability, like tubulin (By similarity). In infected host cells the filament ends close to the cell pole are relatively stable, while the other end near the phage DNA is highly dynamic. Both capsid movement and DNA rotation probably require treadmilling (By similarity).</text>
</comment>
<comment type="catalytic activity">
    <reaction evidence="1">
        <text>GTP + H2O = GDP + phosphate + H(+)</text>
        <dbReference type="Rhea" id="RHEA:19669"/>
        <dbReference type="ChEBI" id="CHEBI:15377"/>
        <dbReference type="ChEBI" id="CHEBI:15378"/>
        <dbReference type="ChEBI" id="CHEBI:37565"/>
        <dbReference type="ChEBI" id="CHEBI:43474"/>
        <dbReference type="ChEBI" id="CHEBI:58189"/>
    </reaction>
</comment>
<comment type="activity regulation">
    <text evidence="1">The non-hydrolyzable GTP analog GMPCPP stabilizes filaments, which never disassemble.</text>
</comment>
<comment type="subunit">
    <text evidence="1 4">Homomultimer (PubMed:23528827). Polymerizes in a strictly GTP-dependent manner (By similarity).</text>
</comment>
<comment type="subcellular location">
    <subcellularLocation>
        <location evidence="1">Host cytoplasm</location>
    </subcellularLocation>
    <text evidence="1">In infected host cells forms a spindle-like structure emanating from each cell pole.</text>
</comment>
<comment type="domain">
    <text evidence="1">Consists of two domains: a nucleotide-binding N-terminus that hydrolyzes GTP and a C-terminus domain necessary for polymerization. The domains are bridged by a long, central helix. Interactions between the C-terminus and the following monomer drive polymerization.</text>
</comment>
<comment type="similarity">
    <text evidence="6">Belongs to the FtsZ family. PhuZ subfamily.</text>
</comment>
<name>PHUZ_BPDPK</name>
<keyword id="KW-0002">3D-structure</keyword>
<keyword id="KW-0342">GTP-binding</keyword>
<keyword id="KW-1035">Host cytoplasm</keyword>
<keyword id="KW-0378">Hydrolase</keyword>
<keyword id="KW-0547">Nucleotide-binding</keyword>
<keyword id="KW-1185">Reference proteome</keyword>
<feature type="chain" id="PRO_0000448589" description="Phage tubulin-like protein">
    <location>
        <begin position="1"/>
        <end position="327"/>
    </location>
</feature>
<feature type="region of interest" description="Disordered" evidence="3">
    <location>
        <begin position="303"/>
        <end position="327"/>
    </location>
</feature>
<feature type="compositionally biased region" description="Polar residues" evidence="3">
    <location>
        <begin position="318"/>
        <end position="327"/>
    </location>
</feature>
<feature type="binding site" evidence="2">
    <location>
        <begin position="14"/>
        <end position="15"/>
    </location>
    <ligand>
        <name>GTP</name>
        <dbReference type="ChEBI" id="CHEBI:37565"/>
    </ligand>
</feature>
<feature type="binding site" evidence="2">
    <location>
        <begin position="107"/>
        <end position="109"/>
    </location>
    <ligand>
        <name>GTP</name>
        <dbReference type="ChEBI" id="CHEBI:37565"/>
    </ligand>
</feature>
<feature type="site" description="GTP hydrolysis" evidence="1">
    <location>
        <position position="201"/>
    </location>
</feature>
<feature type="site" description="GTP hydrolysis" evidence="1">
    <location>
        <position position="204"/>
    </location>
</feature>
<feature type="strand" evidence="11">
    <location>
        <begin position="6"/>
        <end position="12"/>
    </location>
</feature>
<feature type="helix" evidence="11">
    <location>
        <begin position="13"/>
        <end position="23"/>
    </location>
</feature>
<feature type="strand" evidence="11">
    <location>
        <begin position="28"/>
        <end position="37"/>
    </location>
</feature>
<feature type="turn" evidence="11">
    <location>
        <begin position="46"/>
        <end position="48"/>
    </location>
</feature>
<feature type="strand" evidence="11">
    <location>
        <begin position="49"/>
        <end position="51"/>
    </location>
</feature>
<feature type="helix" evidence="10">
    <location>
        <begin position="62"/>
        <end position="69"/>
    </location>
</feature>
<feature type="helix" evidence="11">
    <location>
        <begin position="74"/>
        <end position="81"/>
    </location>
</feature>
<feature type="helix" evidence="11">
    <location>
        <begin position="82"/>
        <end position="84"/>
    </location>
</feature>
<feature type="helix" evidence="11">
    <location>
        <begin position="85"/>
        <end position="91"/>
    </location>
</feature>
<feature type="strand" evidence="11">
    <location>
        <begin position="96"/>
        <end position="108"/>
    </location>
</feature>
<feature type="helix" evidence="11">
    <location>
        <begin position="109"/>
        <end position="122"/>
    </location>
</feature>
<feature type="strand" evidence="11">
    <location>
        <begin position="127"/>
        <end position="133"/>
    </location>
</feature>
<feature type="helix" evidence="11">
    <location>
        <begin position="138"/>
        <end position="158"/>
    </location>
</feature>
<feature type="strand" evidence="11">
    <location>
        <begin position="163"/>
        <end position="168"/>
    </location>
</feature>
<feature type="helix" evidence="11">
    <location>
        <begin position="175"/>
        <end position="192"/>
    </location>
</feature>
<feature type="helix" evidence="11">
    <location>
        <begin position="202"/>
        <end position="209"/>
    </location>
</feature>
<feature type="helix" evidence="11">
    <location>
        <begin position="211"/>
        <end position="213"/>
    </location>
</feature>
<feature type="strand" evidence="11">
    <location>
        <begin position="222"/>
        <end position="229"/>
    </location>
</feature>
<feature type="helix" evidence="11">
    <location>
        <begin position="230"/>
        <end position="234"/>
    </location>
</feature>
<feature type="strand" evidence="11">
    <location>
        <begin position="236"/>
        <end position="248"/>
    </location>
</feature>
<feature type="helix" evidence="11">
    <location>
        <begin position="249"/>
        <end position="251"/>
    </location>
</feature>
<feature type="strand" evidence="11">
    <location>
        <begin position="259"/>
        <end position="265"/>
    </location>
</feature>
<feature type="turn" evidence="11">
    <location>
        <begin position="268"/>
        <end position="270"/>
    </location>
</feature>
<feature type="strand" evidence="11">
    <location>
        <begin position="274"/>
        <end position="282"/>
    </location>
</feature>
<feature type="helix" evidence="11">
    <location>
        <begin position="284"/>
        <end position="304"/>
    </location>
</feature>
<evidence type="ECO:0000250" key="1">
    <source>
        <dbReference type="UniProtKB" id="B3FK34"/>
    </source>
</evidence>
<evidence type="ECO:0000250" key="2">
    <source>
        <dbReference type="UniProtKB" id="Q8KNP3"/>
    </source>
</evidence>
<evidence type="ECO:0000256" key="3">
    <source>
        <dbReference type="SAM" id="MobiDB-lite"/>
    </source>
</evidence>
<evidence type="ECO:0000269" key="4">
    <source>
    </source>
</evidence>
<evidence type="ECO:0000269" key="5">
    <source>
    </source>
</evidence>
<evidence type="ECO:0000305" key="6"/>
<evidence type="ECO:0000305" key="7">
    <source>
    </source>
</evidence>
<evidence type="ECO:0007744" key="8">
    <source>
        <dbReference type="PDB" id="3ZBP"/>
    </source>
</evidence>
<evidence type="ECO:0007744" key="9">
    <source>
        <dbReference type="PDB" id="3ZBQ"/>
    </source>
</evidence>
<evidence type="ECO:0007829" key="10">
    <source>
        <dbReference type="PDB" id="3ZBP"/>
    </source>
</evidence>
<evidence type="ECO:0007829" key="11">
    <source>
        <dbReference type="PDB" id="3ZBQ"/>
    </source>
</evidence>
<reference key="1">
    <citation type="journal article" date="2002" name="J. Mol. Biol.">
        <title>The genome of bacteriophage phiKZ of Pseudomonas aeruginosa.</title>
        <authorList>
            <person name="Mesyanzhinov V.V."/>
            <person name="Robben J."/>
            <person name="Grymonprez B."/>
            <person name="Kostyuchenko V.A."/>
            <person name="Bourkaltseva M.V."/>
            <person name="Sykilinda N.N."/>
            <person name="Krylov V.N."/>
            <person name="Volckaert G."/>
        </authorList>
    </citation>
    <scope>NUCLEOTIDE SEQUENCE [GENOMIC DNA]</scope>
</reference>
<reference key="2">
    <citation type="journal article" date="2017" name="Cell Rep.">
        <title>The Phage Nucleus and Tubulin Spindle Are Conserved among Large Pseudomonas Phages.</title>
        <authorList>
            <person name="Chaikeeratisak V."/>
            <person name="Nguyen K."/>
            <person name="Egan M.E."/>
            <person name="Erb M.L."/>
            <person name="Vavilina A."/>
            <person name="Pogliano J."/>
        </authorList>
    </citation>
    <scope>FUNCTION</scope>
    <scope>SUBCELLULAR LOCATION</scope>
</reference>
<reference evidence="8 9" key="3">
    <citation type="journal article" date="2013" name="J. Mol. Biol.">
        <title>Structure of the tubulin/FtsZ-like protein TubZ from Pseudomonas bacteriophage KZ.</title>
        <authorList>
            <person name="Aylett C.H."/>
            <person name="Izore T."/>
            <person name="Amos L.A."/>
            <person name="Lowe J."/>
        </authorList>
    </citation>
    <scope>X-RAY CRYSTALLOGRAPHY (1.70 ANGSTROMS)</scope>
    <scope>SUBUNIT</scope>
    <scope>FUNCTION</scope>
</reference>
<accession>Q8SDC3</accession>